<protein>
    <recommendedName>
        <fullName evidence="1">Malate synthase G</fullName>
        <ecNumber evidence="1">2.3.3.9</ecNumber>
    </recommendedName>
</protein>
<dbReference type="EC" id="2.3.3.9" evidence="1"/>
<dbReference type="EMBL" id="CP000285">
    <property type="protein sequence ID" value="ABE60498.1"/>
    <property type="molecule type" value="Genomic_DNA"/>
</dbReference>
<dbReference type="RefSeq" id="WP_011508444.1">
    <property type="nucleotide sequence ID" value="NC_007963.1"/>
</dbReference>
<dbReference type="SMR" id="Q1QSR0"/>
<dbReference type="STRING" id="290398.Csal_3154"/>
<dbReference type="GeneID" id="95335849"/>
<dbReference type="KEGG" id="csa:Csal_3154"/>
<dbReference type="eggNOG" id="COG2225">
    <property type="taxonomic scope" value="Bacteria"/>
</dbReference>
<dbReference type="HOGENOM" id="CLU_028446_1_0_6"/>
<dbReference type="OrthoDB" id="9762054at2"/>
<dbReference type="UniPathway" id="UPA00703">
    <property type="reaction ID" value="UER00720"/>
</dbReference>
<dbReference type="Proteomes" id="UP000000239">
    <property type="component" value="Chromosome"/>
</dbReference>
<dbReference type="GO" id="GO:0005829">
    <property type="term" value="C:cytosol"/>
    <property type="evidence" value="ECO:0007669"/>
    <property type="project" value="TreeGrafter"/>
</dbReference>
<dbReference type="GO" id="GO:0000287">
    <property type="term" value="F:magnesium ion binding"/>
    <property type="evidence" value="ECO:0007669"/>
    <property type="project" value="TreeGrafter"/>
</dbReference>
<dbReference type="GO" id="GO:0004474">
    <property type="term" value="F:malate synthase activity"/>
    <property type="evidence" value="ECO:0007669"/>
    <property type="project" value="UniProtKB-UniRule"/>
</dbReference>
<dbReference type="GO" id="GO:0009436">
    <property type="term" value="P:glyoxylate catabolic process"/>
    <property type="evidence" value="ECO:0007669"/>
    <property type="project" value="TreeGrafter"/>
</dbReference>
<dbReference type="GO" id="GO:0006097">
    <property type="term" value="P:glyoxylate cycle"/>
    <property type="evidence" value="ECO:0007669"/>
    <property type="project" value="UniProtKB-UniRule"/>
</dbReference>
<dbReference type="GO" id="GO:0006099">
    <property type="term" value="P:tricarboxylic acid cycle"/>
    <property type="evidence" value="ECO:0007669"/>
    <property type="project" value="UniProtKB-KW"/>
</dbReference>
<dbReference type="CDD" id="cd00728">
    <property type="entry name" value="malate_synt_G"/>
    <property type="match status" value="1"/>
</dbReference>
<dbReference type="FunFam" id="3.20.20.360:FF:000002">
    <property type="entry name" value="Malate synthase G"/>
    <property type="match status" value="1"/>
</dbReference>
<dbReference type="Gene3D" id="3.20.20.360">
    <property type="entry name" value="Malate synthase, domain 3"/>
    <property type="match status" value="2"/>
</dbReference>
<dbReference type="Gene3D" id="1.20.1220.12">
    <property type="entry name" value="Malate synthase, domain III"/>
    <property type="match status" value="1"/>
</dbReference>
<dbReference type="HAMAP" id="MF_00641">
    <property type="entry name" value="Malate_synth_G"/>
    <property type="match status" value="1"/>
</dbReference>
<dbReference type="InterPro" id="IPR044856">
    <property type="entry name" value="Malate_synth_C_sf"/>
</dbReference>
<dbReference type="InterPro" id="IPR011076">
    <property type="entry name" value="Malate_synth_sf"/>
</dbReference>
<dbReference type="InterPro" id="IPR001465">
    <property type="entry name" value="Malate_synthase_TIM"/>
</dbReference>
<dbReference type="InterPro" id="IPR006253">
    <property type="entry name" value="Malate_synthG"/>
</dbReference>
<dbReference type="InterPro" id="IPR048355">
    <property type="entry name" value="MS_C"/>
</dbReference>
<dbReference type="InterPro" id="IPR048356">
    <property type="entry name" value="MS_N"/>
</dbReference>
<dbReference type="InterPro" id="IPR046363">
    <property type="entry name" value="MS_N_TIM-barrel_dom"/>
</dbReference>
<dbReference type="InterPro" id="IPR048357">
    <property type="entry name" value="MSG_insertion"/>
</dbReference>
<dbReference type="NCBIfam" id="TIGR01345">
    <property type="entry name" value="malate_syn_G"/>
    <property type="match status" value="1"/>
</dbReference>
<dbReference type="NCBIfam" id="NF002825">
    <property type="entry name" value="PRK02999.1"/>
    <property type="match status" value="1"/>
</dbReference>
<dbReference type="PANTHER" id="PTHR42739">
    <property type="entry name" value="MALATE SYNTHASE G"/>
    <property type="match status" value="1"/>
</dbReference>
<dbReference type="PANTHER" id="PTHR42739:SF1">
    <property type="entry name" value="MALATE SYNTHASE G"/>
    <property type="match status" value="1"/>
</dbReference>
<dbReference type="Pfam" id="PF20659">
    <property type="entry name" value="MS_C"/>
    <property type="match status" value="1"/>
</dbReference>
<dbReference type="Pfam" id="PF20656">
    <property type="entry name" value="MS_N"/>
    <property type="match status" value="1"/>
</dbReference>
<dbReference type="Pfam" id="PF01274">
    <property type="entry name" value="MS_TIM-barrel"/>
    <property type="match status" value="1"/>
</dbReference>
<dbReference type="Pfam" id="PF20658">
    <property type="entry name" value="MSG_insertion"/>
    <property type="match status" value="1"/>
</dbReference>
<dbReference type="SUPFAM" id="SSF51645">
    <property type="entry name" value="Malate synthase G"/>
    <property type="match status" value="1"/>
</dbReference>
<sequence length="742" mass="80564">MTDRTTRHRLQVASQLDRFINDEALPGTGVDPEAFWAGFDALVHELVPTNRDLLAERERLQDELDAWHKANPGPVRDMAAYRAFLKDIGYLVEAPAKVQATTANVDDEIAVQAGPQLVVPVSNARYALNAANARWGSLYDALYGTDVIPETDGAEKSQGYNPKRGEKVIAYARGVLDQAAPLAEGTHAEASAYALRDGKLVVTLQGGGETGLADPAQLVGYRGEAQAPTAVLLANHGLHLEVQFDATHPIGKTDPAHVKDVLVEAAVSTIMDCEDSVAAVDADDKTLVYRNWLGLMKGDLEERFDKGGKTVTRALNPDRDYTVPGGGELRLPGRSLLFVRNVGHLMTTPAVLDGDGNEIPEGMLDGVVTSLLAIHDLKKGDGAAPSATAPEAKRNSRTGSVYIVKPKMHGPREVAFANSLFMRIEDMLGLPRDTLKMGIMDEERRTSINLDACIHEAASRVAFINTGFLDRTGDEMHTAMEAGPMLRKGEMKGTKWIAAYEKNNVQTGLACGLRGRAQIGKGMWAMPELMAAMLEQKIGHPQAGATTAWVPSPTAAVLHALHYHQVDVATIQRELEAKPGGDFLDDLLTVPVVESAASGANKSPSWSDDEIQQELDNNCQGILGYVVRWVEHGVGCSKVPDIHDVGLMEDRATLRISSQHIANWLHHGIVSEARVRETLERMAKVVDDQNAHDPDYTPMTSHLAESCAFQAASDLIFKGREQPAGYTEPLLHHWRAVHKAKS</sequence>
<gene>
    <name evidence="1" type="primary">glcB</name>
    <name type="ordered locus">Csal_3154</name>
</gene>
<organism>
    <name type="scientific">Chromohalobacter salexigens (strain ATCC BAA-138 / DSM 3043 / CIP 106854 / NCIMB 13768 / 1H11)</name>
    <dbReference type="NCBI Taxonomy" id="290398"/>
    <lineage>
        <taxon>Bacteria</taxon>
        <taxon>Pseudomonadati</taxon>
        <taxon>Pseudomonadota</taxon>
        <taxon>Gammaproteobacteria</taxon>
        <taxon>Oceanospirillales</taxon>
        <taxon>Halomonadaceae</taxon>
        <taxon>Chromohalobacter</taxon>
    </lineage>
</organism>
<accession>Q1QSR0</accession>
<proteinExistence type="inferred from homology"/>
<evidence type="ECO:0000255" key="1">
    <source>
        <dbReference type="HAMAP-Rule" id="MF_00641"/>
    </source>
</evidence>
<keyword id="KW-0963">Cytoplasm</keyword>
<keyword id="KW-0329">Glyoxylate bypass</keyword>
<keyword id="KW-0460">Magnesium</keyword>
<keyword id="KW-0479">Metal-binding</keyword>
<keyword id="KW-0558">Oxidation</keyword>
<keyword id="KW-1185">Reference proteome</keyword>
<keyword id="KW-0808">Transferase</keyword>
<keyword id="KW-0816">Tricarboxylic acid cycle</keyword>
<feature type="chain" id="PRO_1000056901" description="Malate synthase G">
    <location>
        <begin position="1"/>
        <end position="742"/>
    </location>
</feature>
<feature type="active site" description="Proton acceptor" evidence="1">
    <location>
        <position position="340"/>
    </location>
</feature>
<feature type="active site" description="Proton donor" evidence="1">
    <location>
        <position position="650"/>
    </location>
</feature>
<feature type="binding site" evidence="1">
    <location>
        <position position="118"/>
    </location>
    <ligand>
        <name>acetyl-CoA</name>
        <dbReference type="ChEBI" id="CHEBI:57288"/>
    </ligand>
</feature>
<feature type="binding site" evidence="1">
    <location>
        <begin position="125"/>
        <end position="126"/>
    </location>
    <ligand>
        <name>acetyl-CoA</name>
        <dbReference type="ChEBI" id="CHEBI:57288"/>
    </ligand>
</feature>
<feature type="binding site" evidence="1">
    <location>
        <position position="276"/>
    </location>
    <ligand>
        <name>acetyl-CoA</name>
        <dbReference type="ChEBI" id="CHEBI:57288"/>
    </ligand>
</feature>
<feature type="binding site" evidence="1">
    <location>
        <position position="313"/>
    </location>
    <ligand>
        <name>acetyl-CoA</name>
        <dbReference type="ChEBI" id="CHEBI:57288"/>
    </ligand>
</feature>
<feature type="binding site" evidence="1">
    <location>
        <position position="340"/>
    </location>
    <ligand>
        <name>glyoxylate</name>
        <dbReference type="ChEBI" id="CHEBI:36655"/>
    </ligand>
</feature>
<feature type="binding site" evidence="1">
    <location>
        <position position="442"/>
    </location>
    <ligand>
        <name>glyoxylate</name>
        <dbReference type="ChEBI" id="CHEBI:36655"/>
    </ligand>
</feature>
<feature type="binding site" evidence="1">
    <location>
        <position position="442"/>
    </location>
    <ligand>
        <name>Mg(2+)</name>
        <dbReference type="ChEBI" id="CHEBI:18420"/>
    </ligand>
</feature>
<feature type="binding site" evidence="1">
    <location>
        <begin position="467"/>
        <end position="470"/>
    </location>
    <ligand>
        <name>glyoxylate</name>
        <dbReference type="ChEBI" id="CHEBI:36655"/>
    </ligand>
</feature>
<feature type="binding site" evidence="1">
    <location>
        <position position="470"/>
    </location>
    <ligand>
        <name>Mg(2+)</name>
        <dbReference type="ChEBI" id="CHEBI:18420"/>
    </ligand>
</feature>
<feature type="binding site" evidence="1">
    <location>
        <position position="551"/>
    </location>
    <ligand>
        <name>acetyl-CoA</name>
        <dbReference type="ChEBI" id="CHEBI:57288"/>
    </ligand>
</feature>
<feature type="modified residue" description="Cysteine sulfenic acid (-SOH)" evidence="1">
    <location>
        <position position="636"/>
    </location>
</feature>
<feature type="modified residue" description="Cysteine sulfenic acid (-SOH)" evidence="1">
    <location>
        <position position="707"/>
    </location>
</feature>
<comment type="function">
    <text evidence="1">Involved in the glycolate utilization. Catalyzes the condensation and subsequent hydrolysis of acetyl-coenzyme A (acetyl-CoA) and glyoxylate to form malate and CoA.</text>
</comment>
<comment type="catalytic activity">
    <reaction evidence="1">
        <text>glyoxylate + acetyl-CoA + H2O = (S)-malate + CoA + H(+)</text>
        <dbReference type="Rhea" id="RHEA:18181"/>
        <dbReference type="ChEBI" id="CHEBI:15377"/>
        <dbReference type="ChEBI" id="CHEBI:15378"/>
        <dbReference type="ChEBI" id="CHEBI:15589"/>
        <dbReference type="ChEBI" id="CHEBI:36655"/>
        <dbReference type="ChEBI" id="CHEBI:57287"/>
        <dbReference type="ChEBI" id="CHEBI:57288"/>
        <dbReference type="EC" id="2.3.3.9"/>
    </reaction>
</comment>
<comment type="cofactor">
    <cofactor evidence="1">
        <name>Mg(2+)</name>
        <dbReference type="ChEBI" id="CHEBI:18420"/>
    </cofactor>
</comment>
<comment type="pathway">
    <text evidence="1">Carbohydrate metabolism; glyoxylate cycle; (S)-malate from isocitrate: step 2/2.</text>
</comment>
<comment type="subunit">
    <text evidence="1">Monomer.</text>
</comment>
<comment type="subcellular location">
    <subcellularLocation>
        <location evidence="1">Cytoplasm</location>
    </subcellularLocation>
</comment>
<comment type="similarity">
    <text evidence="1">Belongs to the malate synthase family. GlcB subfamily.</text>
</comment>
<reference key="1">
    <citation type="journal article" date="2011" name="Stand. Genomic Sci.">
        <title>Complete genome sequence of the halophilic and highly halotolerant Chromohalobacter salexigens type strain (1H11(T)).</title>
        <authorList>
            <person name="Copeland A."/>
            <person name="O'Connor K."/>
            <person name="Lucas S."/>
            <person name="Lapidus A."/>
            <person name="Berry K.W."/>
            <person name="Detter J.C."/>
            <person name="Del Rio T.G."/>
            <person name="Hammon N."/>
            <person name="Dalin E."/>
            <person name="Tice H."/>
            <person name="Pitluck S."/>
            <person name="Bruce D."/>
            <person name="Goodwin L."/>
            <person name="Han C."/>
            <person name="Tapia R."/>
            <person name="Saunders E."/>
            <person name="Schmutz J."/>
            <person name="Brettin T."/>
            <person name="Larimer F."/>
            <person name="Land M."/>
            <person name="Hauser L."/>
            <person name="Vargas C."/>
            <person name="Nieto J.J."/>
            <person name="Kyrpides N.C."/>
            <person name="Ivanova N."/>
            <person name="Goker M."/>
            <person name="Klenk H.P."/>
            <person name="Csonka L.N."/>
            <person name="Woyke T."/>
        </authorList>
    </citation>
    <scope>NUCLEOTIDE SEQUENCE [LARGE SCALE GENOMIC DNA]</scope>
    <source>
        <strain>ATCC BAA-138 / DSM 3043 / CIP 106854 / NCIMB 13768 / 1H11</strain>
    </source>
</reference>
<name>MASZ_CHRSD</name>